<sequence>MLESLTLQPIALINGTVNLPGSKSVSNRALLLAALAEGTTRLHNLLDSDDIRHMLNALKSLGVNYRLSADRTQCDVDGLGGPLVADKTLELFLGNAGTAMRPLAAALCLGYSDIVLTGEERMKERPIGHLVDALEGGAQIDYLEQENYPPLRIRGGFRGGELTVDGSVSSQFLTALLMAAPLATQDTHIRIQGDLVSRPYIDITLHLMRSFGVEVTHQNYQVFHIQGGQTYHSPGEYLVEGDASSASYFLAAAAIKGGTVRVTGIGKKSVQGDTKFADVLEKMGAIIHWGDDYIECSRGELRDIDMDMNHIPDAAMTIATAALFAKGPTIIRNIYNWRVKETDRLSAMATELRKVGAEVEEGQDYIRVVPPAHLIAAEIGTYNDHRMAMCFSLVALSDTPVTILDPKCTAKTFPDYFEQLARLSVLA</sequence>
<name>AROA_YERRU</name>
<organism>
    <name type="scientific">Yersinia ruckeri</name>
    <dbReference type="NCBI Taxonomy" id="29486"/>
    <lineage>
        <taxon>Bacteria</taxon>
        <taxon>Pseudomonadati</taxon>
        <taxon>Pseudomonadota</taxon>
        <taxon>Gammaproteobacteria</taxon>
        <taxon>Enterobacterales</taxon>
        <taxon>Yersiniaceae</taxon>
        <taxon>Yersinia</taxon>
    </lineage>
</organism>
<evidence type="ECO:0000255" key="1">
    <source>
        <dbReference type="HAMAP-Rule" id="MF_00210"/>
    </source>
</evidence>
<proteinExistence type="inferred from homology"/>
<gene>
    <name evidence="1" type="primary">aroA</name>
</gene>
<keyword id="KW-0028">Amino-acid biosynthesis</keyword>
<keyword id="KW-0057">Aromatic amino acid biosynthesis</keyword>
<keyword id="KW-0963">Cytoplasm</keyword>
<keyword id="KW-0808">Transferase</keyword>
<accession>Q93ED4</accession>
<feature type="chain" id="PRO_0000088324" description="3-phosphoshikimate 1-carboxyvinyltransferase">
    <location>
        <begin position="1"/>
        <end position="427"/>
    </location>
</feature>
<feature type="active site" description="Proton acceptor" evidence="1">
    <location>
        <position position="313"/>
    </location>
</feature>
<feature type="binding site" evidence="1">
    <location>
        <position position="23"/>
    </location>
    <ligand>
        <name>3-phosphoshikimate</name>
        <dbReference type="ChEBI" id="CHEBI:145989"/>
    </ligand>
</feature>
<feature type="binding site" evidence="1">
    <location>
        <position position="23"/>
    </location>
    <ligand>
        <name>phosphoenolpyruvate</name>
        <dbReference type="ChEBI" id="CHEBI:58702"/>
    </ligand>
</feature>
<feature type="binding site" evidence="1">
    <location>
        <position position="24"/>
    </location>
    <ligand>
        <name>3-phosphoshikimate</name>
        <dbReference type="ChEBI" id="CHEBI:145989"/>
    </ligand>
</feature>
<feature type="binding site" evidence="1">
    <location>
        <position position="28"/>
    </location>
    <ligand>
        <name>3-phosphoshikimate</name>
        <dbReference type="ChEBI" id="CHEBI:145989"/>
    </ligand>
</feature>
<feature type="binding site" evidence="1">
    <location>
        <position position="97"/>
    </location>
    <ligand>
        <name>phosphoenolpyruvate</name>
        <dbReference type="ChEBI" id="CHEBI:58702"/>
    </ligand>
</feature>
<feature type="binding site" evidence="1">
    <location>
        <position position="125"/>
    </location>
    <ligand>
        <name>phosphoenolpyruvate</name>
        <dbReference type="ChEBI" id="CHEBI:58702"/>
    </ligand>
</feature>
<feature type="binding site" evidence="1">
    <location>
        <position position="169"/>
    </location>
    <ligand>
        <name>3-phosphoshikimate</name>
        <dbReference type="ChEBI" id="CHEBI:145989"/>
    </ligand>
</feature>
<feature type="binding site" evidence="1">
    <location>
        <position position="170"/>
    </location>
    <ligand>
        <name>3-phosphoshikimate</name>
        <dbReference type="ChEBI" id="CHEBI:145989"/>
    </ligand>
</feature>
<feature type="binding site" evidence="1">
    <location>
        <position position="171"/>
    </location>
    <ligand>
        <name>3-phosphoshikimate</name>
        <dbReference type="ChEBI" id="CHEBI:145989"/>
    </ligand>
</feature>
<feature type="binding site" evidence="1">
    <location>
        <position position="171"/>
    </location>
    <ligand>
        <name>phosphoenolpyruvate</name>
        <dbReference type="ChEBI" id="CHEBI:58702"/>
    </ligand>
</feature>
<feature type="binding site" evidence="1">
    <location>
        <position position="197"/>
    </location>
    <ligand>
        <name>3-phosphoshikimate</name>
        <dbReference type="ChEBI" id="CHEBI:145989"/>
    </ligand>
</feature>
<feature type="binding site" evidence="1">
    <location>
        <position position="313"/>
    </location>
    <ligand>
        <name>3-phosphoshikimate</name>
        <dbReference type="ChEBI" id="CHEBI:145989"/>
    </ligand>
</feature>
<feature type="binding site" evidence="1">
    <location>
        <position position="336"/>
    </location>
    <ligand>
        <name>3-phosphoshikimate</name>
        <dbReference type="ChEBI" id="CHEBI:145989"/>
    </ligand>
</feature>
<feature type="binding site" evidence="1">
    <location>
        <position position="340"/>
    </location>
    <ligand>
        <name>3-phosphoshikimate</name>
        <dbReference type="ChEBI" id="CHEBI:145989"/>
    </ligand>
</feature>
<feature type="binding site" evidence="1">
    <location>
        <position position="344"/>
    </location>
    <ligand>
        <name>phosphoenolpyruvate</name>
        <dbReference type="ChEBI" id="CHEBI:58702"/>
    </ligand>
</feature>
<feature type="binding site" evidence="1">
    <location>
        <position position="386"/>
    </location>
    <ligand>
        <name>phosphoenolpyruvate</name>
        <dbReference type="ChEBI" id="CHEBI:58702"/>
    </ligand>
</feature>
<feature type="binding site" evidence="1">
    <location>
        <position position="411"/>
    </location>
    <ligand>
        <name>phosphoenolpyruvate</name>
        <dbReference type="ChEBI" id="CHEBI:58702"/>
    </ligand>
</feature>
<reference key="1">
    <citation type="submission" date="2001-03" db="EMBL/GenBank/DDBJ databases">
        <title>Molecular cloning of Yersinia ruckeri aroA gene: a useful taxonomic tool.</title>
        <authorList>
            <person name="Naharro G."/>
            <person name="Luengo J.M."/>
            <person name="Yugueros J."/>
            <person name="Temprano A."/>
        </authorList>
    </citation>
    <scope>NUCLEOTIDE SEQUENCE [GENOMIC DNA]</scope>
</reference>
<protein>
    <recommendedName>
        <fullName evidence="1">3-phosphoshikimate 1-carboxyvinyltransferase</fullName>
        <ecNumber evidence="1">2.5.1.19</ecNumber>
    </recommendedName>
    <alternativeName>
        <fullName evidence="1">5-enolpyruvylshikimate-3-phosphate synthase</fullName>
        <shortName evidence="1">EPSP synthase</shortName>
        <shortName evidence="1">EPSPS</shortName>
    </alternativeName>
</protein>
<dbReference type="EC" id="2.5.1.19" evidence="1"/>
<dbReference type="EMBL" id="AF360730">
    <property type="protein sequence ID" value="AAK97382.1"/>
    <property type="molecule type" value="Genomic_DNA"/>
</dbReference>
<dbReference type="SMR" id="Q93ED4"/>
<dbReference type="STRING" id="29486.UGYR_16485"/>
<dbReference type="eggNOG" id="COG0128">
    <property type="taxonomic scope" value="Bacteria"/>
</dbReference>
<dbReference type="UniPathway" id="UPA00053">
    <property type="reaction ID" value="UER00089"/>
</dbReference>
<dbReference type="GO" id="GO:0005737">
    <property type="term" value="C:cytoplasm"/>
    <property type="evidence" value="ECO:0007669"/>
    <property type="project" value="UniProtKB-SubCell"/>
</dbReference>
<dbReference type="GO" id="GO:0003866">
    <property type="term" value="F:3-phosphoshikimate 1-carboxyvinyltransferase activity"/>
    <property type="evidence" value="ECO:0007669"/>
    <property type="project" value="UniProtKB-UniRule"/>
</dbReference>
<dbReference type="GO" id="GO:0008652">
    <property type="term" value="P:amino acid biosynthetic process"/>
    <property type="evidence" value="ECO:0007669"/>
    <property type="project" value="UniProtKB-KW"/>
</dbReference>
<dbReference type="GO" id="GO:0009073">
    <property type="term" value="P:aromatic amino acid family biosynthetic process"/>
    <property type="evidence" value="ECO:0007669"/>
    <property type="project" value="UniProtKB-KW"/>
</dbReference>
<dbReference type="GO" id="GO:0009423">
    <property type="term" value="P:chorismate biosynthetic process"/>
    <property type="evidence" value="ECO:0007669"/>
    <property type="project" value="UniProtKB-UniRule"/>
</dbReference>
<dbReference type="CDD" id="cd01556">
    <property type="entry name" value="EPSP_synthase"/>
    <property type="match status" value="1"/>
</dbReference>
<dbReference type="FunFam" id="3.65.10.10:FF:000003">
    <property type="entry name" value="3-phosphoshikimate 1-carboxyvinyltransferase"/>
    <property type="match status" value="1"/>
</dbReference>
<dbReference type="FunFam" id="3.65.10.10:FF:000004">
    <property type="entry name" value="3-phosphoshikimate 1-carboxyvinyltransferase"/>
    <property type="match status" value="1"/>
</dbReference>
<dbReference type="Gene3D" id="3.65.10.10">
    <property type="entry name" value="Enolpyruvate transferase domain"/>
    <property type="match status" value="2"/>
</dbReference>
<dbReference type="HAMAP" id="MF_00210">
    <property type="entry name" value="EPSP_synth"/>
    <property type="match status" value="1"/>
</dbReference>
<dbReference type="InterPro" id="IPR001986">
    <property type="entry name" value="Enolpyruvate_Tfrase_dom"/>
</dbReference>
<dbReference type="InterPro" id="IPR036968">
    <property type="entry name" value="Enolpyruvate_Tfrase_sf"/>
</dbReference>
<dbReference type="InterPro" id="IPR006264">
    <property type="entry name" value="EPSP_synthase"/>
</dbReference>
<dbReference type="InterPro" id="IPR023193">
    <property type="entry name" value="EPSP_synthase_CS"/>
</dbReference>
<dbReference type="InterPro" id="IPR013792">
    <property type="entry name" value="RNA3'P_cycl/enolpyr_Trfase_a/b"/>
</dbReference>
<dbReference type="NCBIfam" id="TIGR01356">
    <property type="entry name" value="aroA"/>
    <property type="match status" value="1"/>
</dbReference>
<dbReference type="PANTHER" id="PTHR21090">
    <property type="entry name" value="AROM/DEHYDROQUINATE SYNTHASE"/>
    <property type="match status" value="1"/>
</dbReference>
<dbReference type="PANTHER" id="PTHR21090:SF5">
    <property type="entry name" value="PENTAFUNCTIONAL AROM POLYPEPTIDE"/>
    <property type="match status" value="1"/>
</dbReference>
<dbReference type="Pfam" id="PF00275">
    <property type="entry name" value="EPSP_synthase"/>
    <property type="match status" value="1"/>
</dbReference>
<dbReference type="PIRSF" id="PIRSF000505">
    <property type="entry name" value="EPSPS"/>
    <property type="match status" value="1"/>
</dbReference>
<dbReference type="SUPFAM" id="SSF55205">
    <property type="entry name" value="EPT/RTPC-like"/>
    <property type="match status" value="1"/>
</dbReference>
<dbReference type="PROSITE" id="PS00104">
    <property type="entry name" value="EPSP_SYNTHASE_1"/>
    <property type="match status" value="1"/>
</dbReference>
<dbReference type="PROSITE" id="PS00885">
    <property type="entry name" value="EPSP_SYNTHASE_2"/>
    <property type="match status" value="1"/>
</dbReference>
<comment type="function">
    <text evidence="1">Catalyzes the transfer of the enolpyruvyl moiety of phosphoenolpyruvate (PEP) to the 5-hydroxyl of shikimate-3-phosphate (S3P) to produce enolpyruvyl shikimate-3-phosphate and inorganic phosphate.</text>
</comment>
<comment type="catalytic activity">
    <reaction evidence="1">
        <text>3-phosphoshikimate + phosphoenolpyruvate = 5-O-(1-carboxyvinyl)-3-phosphoshikimate + phosphate</text>
        <dbReference type="Rhea" id="RHEA:21256"/>
        <dbReference type="ChEBI" id="CHEBI:43474"/>
        <dbReference type="ChEBI" id="CHEBI:57701"/>
        <dbReference type="ChEBI" id="CHEBI:58702"/>
        <dbReference type="ChEBI" id="CHEBI:145989"/>
        <dbReference type="EC" id="2.5.1.19"/>
    </reaction>
    <physiologicalReaction direction="left-to-right" evidence="1">
        <dbReference type="Rhea" id="RHEA:21257"/>
    </physiologicalReaction>
</comment>
<comment type="pathway">
    <text evidence="1">Metabolic intermediate biosynthesis; chorismate biosynthesis; chorismate from D-erythrose 4-phosphate and phosphoenolpyruvate: step 6/7.</text>
</comment>
<comment type="subunit">
    <text evidence="1">Monomer.</text>
</comment>
<comment type="subcellular location">
    <subcellularLocation>
        <location evidence="1">Cytoplasm</location>
    </subcellularLocation>
</comment>
<comment type="similarity">
    <text evidence="1">Belongs to the EPSP synthase family.</text>
</comment>